<feature type="chain" id="PRO_0000075195" description="Alanine--tRNA ligase">
    <location>
        <begin position="1"/>
        <end position="876"/>
    </location>
</feature>
<feature type="binding site" evidence="1">
    <location>
        <position position="564"/>
    </location>
    <ligand>
        <name>Zn(2+)</name>
        <dbReference type="ChEBI" id="CHEBI:29105"/>
    </ligand>
</feature>
<feature type="binding site" evidence="1">
    <location>
        <position position="568"/>
    </location>
    <ligand>
        <name>Zn(2+)</name>
        <dbReference type="ChEBI" id="CHEBI:29105"/>
    </ligand>
</feature>
<feature type="binding site" evidence="1">
    <location>
        <position position="666"/>
    </location>
    <ligand>
        <name>Zn(2+)</name>
        <dbReference type="ChEBI" id="CHEBI:29105"/>
    </ligand>
</feature>
<feature type="binding site" evidence="1">
    <location>
        <position position="670"/>
    </location>
    <ligand>
        <name>Zn(2+)</name>
        <dbReference type="ChEBI" id="CHEBI:29105"/>
    </ligand>
</feature>
<accession>Q5PF17</accession>
<comment type="function">
    <text evidence="1">Catalyzes the attachment of alanine to tRNA(Ala) in a two-step reaction: alanine is first activated by ATP to form Ala-AMP and then transferred to the acceptor end of tRNA(Ala). Also edits incorrectly charged Ser-tRNA(Ala) and Gly-tRNA(Ala) via its editing domain.</text>
</comment>
<comment type="catalytic activity">
    <reaction evidence="1">
        <text>tRNA(Ala) + L-alanine + ATP = L-alanyl-tRNA(Ala) + AMP + diphosphate</text>
        <dbReference type="Rhea" id="RHEA:12540"/>
        <dbReference type="Rhea" id="RHEA-COMP:9657"/>
        <dbReference type="Rhea" id="RHEA-COMP:9923"/>
        <dbReference type="ChEBI" id="CHEBI:30616"/>
        <dbReference type="ChEBI" id="CHEBI:33019"/>
        <dbReference type="ChEBI" id="CHEBI:57972"/>
        <dbReference type="ChEBI" id="CHEBI:78442"/>
        <dbReference type="ChEBI" id="CHEBI:78497"/>
        <dbReference type="ChEBI" id="CHEBI:456215"/>
        <dbReference type="EC" id="6.1.1.7"/>
    </reaction>
</comment>
<comment type="cofactor">
    <cofactor evidence="1">
        <name>Zn(2+)</name>
        <dbReference type="ChEBI" id="CHEBI:29105"/>
    </cofactor>
    <text evidence="1">Binds 1 zinc ion per subunit.</text>
</comment>
<comment type="subunit">
    <text evidence="1">Homotetramer.</text>
</comment>
<comment type="subcellular location">
    <subcellularLocation>
        <location evidence="1">Cytoplasm</location>
    </subcellularLocation>
</comment>
<comment type="domain">
    <text evidence="1">Consists of three domains; the N-terminal catalytic domain, the editing domain and the C-terminal C-Ala domain. The editing domain removes incorrectly charged amino acids, while the C-Ala domain, along with tRNA(Ala), serves as a bridge to cooperatively bring together the editing and aminoacylation centers thus stimulating deacylation of misacylated tRNAs.</text>
</comment>
<comment type="similarity">
    <text evidence="1">Belongs to the class-II aminoacyl-tRNA synthetase family.</text>
</comment>
<sequence>MSKSTAEIRQAFLDFFHSKGHQVVASSSLVPNNDPTLLFTNAGMNQFKDVFLGLDKRNYSRATTSQRCVRAGGKHNDLENVGYTARHHTFFEMLGNFSFGDYFKHDAIQFAWELLTGENWFALPKERLWVTVYETDDETYEIWEKEVGIPRERIIRIGDNKGAPYASDNFWQMGDTGPCGPCTEIFYDHGDHIWGGPPGSPEEDGDRYIEIWNIVFMQFNRQADGTMEPLPKPSVDTGMGLERIAAVLQHVNSNYDIDLFRTLIEAVAKVTGATDLGNKSLRVIADHIRSCAFLVADGVLPSNENRGYVLRRIIRRAVRHGNMLGAKETFFYKLVGPLIEVMGSAGEELKRQQAQVEQVLKTEEEQFARTLERGLALLDEELAKLQGDTLDGETAFRLYDTYGFPVDLTADVCRERNIKVDEVGFEAAMEEQRRRAREASGFGADYNAMIRVDSASEFKGYDHLELNGKVTALFVDGKAVEAINAGQEAVVVLDQTPFYAESGGQVGDKGELKGAGFTFAVDDTQKYGQAIGHIGKLSAGALKVGDAVQADVDEARRARIRLNHSATHLMHAALRQVLGTHVAQKGSLVSDKVLRFDFSHNEAMKPSEIRQVEDLVNAQIRRNLPIETNIMDLDAAKAKGAMALFGEKYDERVRVLSMGDFSTELCGGTHASRTGDIGLFRIISESGTAAGIRRIEAVTGEGAMATVHAQSDRLNDIAHLLKGDSQNLGDKVRAVLERTRQLEKELQQLKDQAAAQESANLSSKAVDLNGVKLLVSELAGIEPKMLRTMVDDLKNQLVSTVIVLATVVEGKVSLIAGVSKDVTDRVKAGELIGMVAQQVGGKGGGRPDMAQAGGTDAAALPAALASVQGWVSAKLQ</sequence>
<gene>
    <name evidence="1" type="primary">alaS</name>
    <name type="ordered locus">SPA2685</name>
</gene>
<keyword id="KW-0030">Aminoacyl-tRNA synthetase</keyword>
<keyword id="KW-0067">ATP-binding</keyword>
<keyword id="KW-0963">Cytoplasm</keyword>
<keyword id="KW-0436">Ligase</keyword>
<keyword id="KW-0479">Metal-binding</keyword>
<keyword id="KW-0547">Nucleotide-binding</keyword>
<keyword id="KW-0648">Protein biosynthesis</keyword>
<keyword id="KW-0694">RNA-binding</keyword>
<keyword id="KW-0820">tRNA-binding</keyword>
<keyword id="KW-0862">Zinc</keyword>
<protein>
    <recommendedName>
        <fullName evidence="1">Alanine--tRNA ligase</fullName>
        <ecNumber evidence="1">6.1.1.7</ecNumber>
    </recommendedName>
    <alternativeName>
        <fullName evidence="1">Alanyl-tRNA synthetase</fullName>
        <shortName evidence="1">AlaRS</shortName>
    </alternativeName>
</protein>
<dbReference type="EC" id="6.1.1.7" evidence="1"/>
<dbReference type="EMBL" id="CP000026">
    <property type="protein sequence ID" value="AAV78542.1"/>
    <property type="molecule type" value="Genomic_DNA"/>
</dbReference>
<dbReference type="RefSeq" id="WP_000047245.1">
    <property type="nucleotide sequence ID" value="NC_006511.1"/>
</dbReference>
<dbReference type="SMR" id="Q5PF17"/>
<dbReference type="KEGG" id="spt:SPA2685"/>
<dbReference type="HOGENOM" id="CLU_004485_1_1_6"/>
<dbReference type="Proteomes" id="UP000008185">
    <property type="component" value="Chromosome"/>
</dbReference>
<dbReference type="GO" id="GO:0005829">
    <property type="term" value="C:cytosol"/>
    <property type="evidence" value="ECO:0007669"/>
    <property type="project" value="TreeGrafter"/>
</dbReference>
<dbReference type="GO" id="GO:0004813">
    <property type="term" value="F:alanine-tRNA ligase activity"/>
    <property type="evidence" value="ECO:0007669"/>
    <property type="project" value="UniProtKB-UniRule"/>
</dbReference>
<dbReference type="GO" id="GO:0002161">
    <property type="term" value="F:aminoacyl-tRNA deacylase activity"/>
    <property type="evidence" value="ECO:0007669"/>
    <property type="project" value="TreeGrafter"/>
</dbReference>
<dbReference type="GO" id="GO:0005524">
    <property type="term" value="F:ATP binding"/>
    <property type="evidence" value="ECO:0007669"/>
    <property type="project" value="UniProtKB-UniRule"/>
</dbReference>
<dbReference type="GO" id="GO:0000049">
    <property type="term" value="F:tRNA binding"/>
    <property type="evidence" value="ECO:0007669"/>
    <property type="project" value="UniProtKB-KW"/>
</dbReference>
<dbReference type="GO" id="GO:0008270">
    <property type="term" value="F:zinc ion binding"/>
    <property type="evidence" value="ECO:0007669"/>
    <property type="project" value="UniProtKB-UniRule"/>
</dbReference>
<dbReference type="GO" id="GO:0006419">
    <property type="term" value="P:alanyl-tRNA aminoacylation"/>
    <property type="evidence" value="ECO:0007669"/>
    <property type="project" value="UniProtKB-UniRule"/>
</dbReference>
<dbReference type="GO" id="GO:0045892">
    <property type="term" value="P:negative regulation of DNA-templated transcription"/>
    <property type="evidence" value="ECO:0007669"/>
    <property type="project" value="TreeGrafter"/>
</dbReference>
<dbReference type="CDD" id="cd00673">
    <property type="entry name" value="AlaRS_core"/>
    <property type="match status" value="1"/>
</dbReference>
<dbReference type="FunFam" id="2.40.30.130:FF:000001">
    <property type="entry name" value="Alanine--tRNA ligase"/>
    <property type="match status" value="1"/>
</dbReference>
<dbReference type="FunFam" id="3.10.310.40:FF:000001">
    <property type="entry name" value="Alanine--tRNA ligase"/>
    <property type="match status" value="1"/>
</dbReference>
<dbReference type="FunFam" id="3.30.54.20:FF:000001">
    <property type="entry name" value="Alanine--tRNA ligase"/>
    <property type="match status" value="1"/>
</dbReference>
<dbReference type="FunFam" id="3.30.930.10:FF:000004">
    <property type="entry name" value="Alanine--tRNA ligase"/>
    <property type="match status" value="1"/>
</dbReference>
<dbReference type="FunFam" id="3.30.980.10:FF:000004">
    <property type="entry name" value="Alanine--tRNA ligase, cytoplasmic"/>
    <property type="match status" value="1"/>
</dbReference>
<dbReference type="Gene3D" id="2.40.30.130">
    <property type="match status" value="1"/>
</dbReference>
<dbReference type="Gene3D" id="3.10.310.40">
    <property type="match status" value="1"/>
</dbReference>
<dbReference type="Gene3D" id="3.30.54.20">
    <property type="match status" value="1"/>
</dbReference>
<dbReference type="Gene3D" id="6.10.250.550">
    <property type="match status" value="1"/>
</dbReference>
<dbReference type="Gene3D" id="3.30.930.10">
    <property type="entry name" value="Bira Bifunctional Protein, Domain 2"/>
    <property type="match status" value="1"/>
</dbReference>
<dbReference type="Gene3D" id="3.30.980.10">
    <property type="entry name" value="Threonyl-trna Synthetase, Chain A, domain 2"/>
    <property type="match status" value="1"/>
</dbReference>
<dbReference type="HAMAP" id="MF_00036_B">
    <property type="entry name" value="Ala_tRNA_synth_B"/>
    <property type="match status" value="1"/>
</dbReference>
<dbReference type="InterPro" id="IPR045864">
    <property type="entry name" value="aa-tRNA-synth_II/BPL/LPL"/>
</dbReference>
<dbReference type="InterPro" id="IPR002318">
    <property type="entry name" value="Ala-tRNA-lgiase_IIc"/>
</dbReference>
<dbReference type="InterPro" id="IPR018162">
    <property type="entry name" value="Ala-tRNA-ligase_IIc_anticod-bd"/>
</dbReference>
<dbReference type="InterPro" id="IPR018165">
    <property type="entry name" value="Ala-tRNA-synth_IIc_core"/>
</dbReference>
<dbReference type="InterPro" id="IPR018164">
    <property type="entry name" value="Ala-tRNA-synth_IIc_N"/>
</dbReference>
<dbReference type="InterPro" id="IPR050058">
    <property type="entry name" value="Ala-tRNA_ligase"/>
</dbReference>
<dbReference type="InterPro" id="IPR023033">
    <property type="entry name" value="Ala_tRNA_ligase_euk/bac"/>
</dbReference>
<dbReference type="InterPro" id="IPR003156">
    <property type="entry name" value="DHHA1_dom"/>
</dbReference>
<dbReference type="InterPro" id="IPR018163">
    <property type="entry name" value="Thr/Ala-tRNA-synth_IIc_edit"/>
</dbReference>
<dbReference type="InterPro" id="IPR009000">
    <property type="entry name" value="Transl_B-barrel_sf"/>
</dbReference>
<dbReference type="InterPro" id="IPR012947">
    <property type="entry name" value="tRNA_SAD"/>
</dbReference>
<dbReference type="NCBIfam" id="TIGR00344">
    <property type="entry name" value="alaS"/>
    <property type="match status" value="1"/>
</dbReference>
<dbReference type="PANTHER" id="PTHR11777:SF9">
    <property type="entry name" value="ALANINE--TRNA LIGASE, CYTOPLASMIC"/>
    <property type="match status" value="1"/>
</dbReference>
<dbReference type="PANTHER" id="PTHR11777">
    <property type="entry name" value="ALANYL-TRNA SYNTHETASE"/>
    <property type="match status" value="1"/>
</dbReference>
<dbReference type="Pfam" id="PF02272">
    <property type="entry name" value="DHHA1"/>
    <property type="match status" value="1"/>
</dbReference>
<dbReference type="Pfam" id="PF01411">
    <property type="entry name" value="tRNA-synt_2c"/>
    <property type="match status" value="1"/>
</dbReference>
<dbReference type="Pfam" id="PF07973">
    <property type="entry name" value="tRNA_SAD"/>
    <property type="match status" value="1"/>
</dbReference>
<dbReference type="PRINTS" id="PR00980">
    <property type="entry name" value="TRNASYNTHALA"/>
</dbReference>
<dbReference type="SMART" id="SM00863">
    <property type="entry name" value="tRNA_SAD"/>
    <property type="match status" value="1"/>
</dbReference>
<dbReference type="SUPFAM" id="SSF55681">
    <property type="entry name" value="Class II aaRS and biotin synthetases"/>
    <property type="match status" value="1"/>
</dbReference>
<dbReference type="SUPFAM" id="SSF101353">
    <property type="entry name" value="Putative anticodon-binding domain of alanyl-tRNA synthetase (AlaRS)"/>
    <property type="match status" value="1"/>
</dbReference>
<dbReference type="SUPFAM" id="SSF55186">
    <property type="entry name" value="ThrRS/AlaRS common domain"/>
    <property type="match status" value="1"/>
</dbReference>
<dbReference type="SUPFAM" id="SSF50447">
    <property type="entry name" value="Translation proteins"/>
    <property type="match status" value="1"/>
</dbReference>
<dbReference type="PROSITE" id="PS50860">
    <property type="entry name" value="AA_TRNA_LIGASE_II_ALA"/>
    <property type="match status" value="1"/>
</dbReference>
<name>SYA_SALPA</name>
<organism>
    <name type="scientific">Salmonella paratyphi A (strain ATCC 9150 / SARB42)</name>
    <dbReference type="NCBI Taxonomy" id="295319"/>
    <lineage>
        <taxon>Bacteria</taxon>
        <taxon>Pseudomonadati</taxon>
        <taxon>Pseudomonadota</taxon>
        <taxon>Gammaproteobacteria</taxon>
        <taxon>Enterobacterales</taxon>
        <taxon>Enterobacteriaceae</taxon>
        <taxon>Salmonella</taxon>
    </lineage>
</organism>
<proteinExistence type="inferred from homology"/>
<evidence type="ECO:0000255" key="1">
    <source>
        <dbReference type="HAMAP-Rule" id="MF_00036"/>
    </source>
</evidence>
<reference key="1">
    <citation type="journal article" date="2004" name="Nat. Genet.">
        <title>Comparison of genome degradation in Paratyphi A and Typhi, human-restricted serovars of Salmonella enterica that cause typhoid.</title>
        <authorList>
            <person name="McClelland M."/>
            <person name="Sanderson K.E."/>
            <person name="Clifton S.W."/>
            <person name="Latreille P."/>
            <person name="Porwollik S."/>
            <person name="Sabo A."/>
            <person name="Meyer R."/>
            <person name="Bieri T."/>
            <person name="Ozersky P."/>
            <person name="McLellan M."/>
            <person name="Harkins C.R."/>
            <person name="Wang C."/>
            <person name="Nguyen C."/>
            <person name="Berghoff A."/>
            <person name="Elliott G."/>
            <person name="Kohlberg S."/>
            <person name="Strong C."/>
            <person name="Du F."/>
            <person name="Carter J."/>
            <person name="Kremizki C."/>
            <person name="Layman D."/>
            <person name="Leonard S."/>
            <person name="Sun H."/>
            <person name="Fulton L."/>
            <person name="Nash W."/>
            <person name="Miner T."/>
            <person name="Minx P."/>
            <person name="Delehaunty K."/>
            <person name="Fronick C."/>
            <person name="Magrini V."/>
            <person name="Nhan M."/>
            <person name="Warren W."/>
            <person name="Florea L."/>
            <person name="Spieth J."/>
            <person name="Wilson R.K."/>
        </authorList>
    </citation>
    <scope>NUCLEOTIDE SEQUENCE [LARGE SCALE GENOMIC DNA]</scope>
    <source>
        <strain>ATCC 9150 / SARB42</strain>
    </source>
</reference>